<dbReference type="EC" id="4.1.1.39" evidence="1"/>
<dbReference type="EMBL" id="U05603">
    <property type="protein sequence ID" value="AAA19887.1"/>
    <property type="molecule type" value="Genomic_DNA"/>
</dbReference>
<dbReference type="SMR" id="Q31674"/>
<dbReference type="GO" id="GO:0009507">
    <property type="term" value="C:chloroplast"/>
    <property type="evidence" value="ECO:0007669"/>
    <property type="project" value="UniProtKB-SubCell"/>
</dbReference>
<dbReference type="GO" id="GO:0000287">
    <property type="term" value="F:magnesium ion binding"/>
    <property type="evidence" value="ECO:0007669"/>
    <property type="project" value="InterPro"/>
</dbReference>
<dbReference type="GO" id="GO:0004497">
    <property type="term" value="F:monooxygenase activity"/>
    <property type="evidence" value="ECO:0007669"/>
    <property type="project" value="UniProtKB-KW"/>
</dbReference>
<dbReference type="GO" id="GO:0016984">
    <property type="term" value="F:ribulose-bisphosphate carboxylase activity"/>
    <property type="evidence" value="ECO:0007669"/>
    <property type="project" value="UniProtKB-EC"/>
</dbReference>
<dbReference type="GO" id="GO:0009853">
    <property type="term" value="P:photorespiration"/>
    <property type="evidence" value="ECO:0007669"/>
    <property type="project" value="UniProtKB-KW"/>
</dbReference>
<dbReference type="GO" id="GO:0019253">
    <property type="term" value="P:reductive pentose-phosphate cycle"/>
    <property type="evidence" value="ECO:0007669"/>
    <property type="project" value="UniProtKB-KW"/>
</dbReference>
<dbReference type="Gene3D" id="3.20.20.110">
    <property type="entry name" value="Ribulose bisphosphate carboxylase, large subunit, C-terminal domain"/>
    <property type="match status" value="1"/>
</dbReference>
<dbReference type="Gene3D" id="3.30.70.150">
    <property type="entry name" value="RuBisCO large subunit, N-terminal domain"/>
    <property type="match status" value="1"/>
</dbReference>
<dbReference type="HAMAP" id="MF_01338">
    <property type="entry name" value="RuBisCO_L_type1"/>
    <property type="match status" value="1"/>
</dbReference>
<dbReference type="InterPro" id="IPR033966">
    <property type="entry name" value="RuBisCO"/>
</dbReference>
<dbReference type="InterPro" id="IPR020878">
    <property type="entry name" value="RuBisCo_large_chain_AS"/>
</dbReference>
<dbReference type="InterPro" id="IPR000685">
    <property type="entry name" value="RuBisCO_lsu_C"/>
</dbReference>
<dbReference type="InterPro" id="IPR036376">
    <property type="entry name" value="RuBisCO_lsu_C_sf"/>
</dbReference>
<dbReference type="InterPro" id="IPR017443">
    <property type="entry name" value="RuBisCO_lsu_fd_N"/>
</dbReference>
<dbReference type="InterPro" id="IPR036422">
    <property type="entry name" value="RuBisCO_lsu_N_sf"/>
</dbReference>
<dbReference type="InterPro" id="IPR020888">
    <property type="entry name" value="RuBisCO_lsuI"/>
</dbReference>
<dbReference type="NCBIfam" id="NF003252">
    <property type="entry name" value="PRK04208.1"/>
    <property type="match status" value="1"/>
</dbReference>
<dbReference type="PANTHER" id="PTHR42704">
    <property type="entry name" value="RIBULOSE BISPHOSPHATE CARBOXYLASE"/>
    <property type="match status" value="1"/>
</dbReference>
<dbReference type="PANTHER" id="PTHR42704:SF17">
    <property type="entry name" value="RIBULOSE BISPHOSPHATE CARBOXYLASE LARGE CHAIN"/>
    <property type="match status" value="1"/>
</dbReference>
<dbReference type="Pfam" id="PF00016">
    <property type="entry name" value="RuBisCO_large"/>
    <property type="match status" value="1"/>
</dbReference>
<dbReference type="Pfam" id="PF02788">
    <property type="entry name" value="RuBisCO_large_N"/>
    <property type="match status" value="1"/>
</dbReference>
<dbReference type="SFLD" id="SFLDG01052">
    <property type="entry name" value="RuBisCO"/>
    <property type="match status" value="1"/>
</dbReference>
<dbReference type="SFLD" id="SFLDS00014">
    <property type="entry name" value="RuBisCO"/>
    <property type="match status" value="1"/>
</dbReference>
<dbReference type="SFLD" id="SFLDG00301">
    <property type="entry name" value="RuBisCO-like_proteins"/>
    <property type="match status" value="1"/>
</dbReference>
<dbReference type="SUPFAM" id="SSF51649">
    <property type="entry name" value="RuBisCo, C-terminal domain"/>
    <property type="match status" value="1"/>
</dbReference>
<dbReference type="SUPFAM" id="SSF54966">
    <property type="entry name" value="RuBisCO, large subunit, small (N-terminal) domain"/>
    <property type="match status" value="1"/>
</dbReference>
<dbReference type="PROSITE" id="PS00157">
    <property type="entry name" value="RUBISCO_LARGE"/>
    <property type="match status" value="1"/>
</dbReference>
<keyword id="KW-0113">Calvin cycle</keyword>
<keyword id="KW-0120">Carbon dioxide fixation</keyword>
<keyword id="KW-0150">Chloroplast</keyword>
<keyword id="KW-1015">Disulfide bond</keyword>
<keyword id="KW-0456">Lyase</keyword>
<keyword id="KW-0460">Magnesium</keyword>
<keyword id="KW-0479">Metal-binding</keyword>
<keyword id="KW-0503">Monooxygenase</keyword>
<keyword id="KW-0560">Oxidoreductase</keyword>
<keyword id="KW-0601">Photorespiration</keyword>
<keyword id="KW-0602">Photosynthesis</keyword>
<keyword id="KW-0934">Plastid</keyword>
<feature type="chain" id="PRO_0000062350" description="Ribulose bisphosphate carboxylase large chain">
    <location>
        <begin position="1" status="less than"/>
        <end position="420" status="greater than"/>
    </location>
</feature>
<feature type="active site" description="Proton acceptor" evidence="1">
    <location>
        <position position="155"/>
    </location>
</feature>
<feature type="active site" description="Proton acceptor" evidence="1">
    <location>
        <position position="274"/>
    </location>
</feature>
<feature type="binding site" description="in homodimeric partner" evidence="1">
    <location>
        <position position="103"/>
    </location>
    <ligand>
        <name>substrate</name>
    </ligand>
</feature>
<feature type="binding site" evidence="1">
    <location>
        <position position="153"/>
    </location>
    <ligand>
        <name>substrate</name>
    </ligand>
</feature>
<feature type="binding site" evidence="1">
    <location>
        <position position="157"/>
    </location>
    <ligand>
        <name>substrate</name>
    </ligand>
</feature>
<feature type="binding site" description="via carbamate group" evidence="1">
    <location>
        <position position="181"/>
    </location>
    <ligand>
        <name>Mg(2+)</name>
        <dbReference type="ChEBI" id="CHEBI:18420"/>
    </ligand>
</feature>
<feature type="binding site" evidence="1">
    <location>
        <position position="183"/>
    </location>
    <ligand>
        <name>Mg(2+)</name>
        <dbReference type="ChEBI" id="CHEBI:18420"/>
    </ligand>
</feature>
<feature type="binding site" evidence="1">
    <location>
        <position position="184"/>
    </location>
    <ligand>
        <name>Mg(2+)</name>
        <dbReference type="ChEBI" id="CHEBI:18420"/>
    </ligand>
</feature>
<feature type="binding site" evidence="1">
    <location>
        <position position="275"/>
    </location>
    <ligand>
        <name>substrate</name>
    </ligand>
</feature>
<feature type="binding site" evidence="1">
    <location>
        <position position="307"/>
    </location>
    <ligand>
        <name>substrate</name>
    </ligand>
</feature>
<feature type="binding site" evidence="1">
    <location>
        <position position="359"/>
    </location>
    <ligand>
        <name>substrate</name>
    </ligand>
</feature>
<feature type="site" description="Transition state stabilizer" evidence="1">
    <location>
        <position position="314"/>
    </location>
</feature>
<feature type="modified residue" description="N6-carboxylysine" evidence="1">
    <location>
        <position position="181"/>
    </location>
</feature>
<feature type="disulfide bond" description="Interchain; in linked form" evidence="1">
    <location>
        <position position="227"/>
    </location>
</feature>
<feature type="non-terminal residue">
    <location>
        <position position="1"/>
    </location>
</feature>
<feature type="non-terminal residue">
    <location>
        <position position="420"/>
    </location>
</feature>
<accession>Q31674</accession>
<evidence type="ECO:0000255" key="1">
    <source>
        <dbReference type="HAMAP-Rule" id="MF_01338"/>
    </source>
</evidence>
<name>RBL_ANEME</name>
<geneLocation type="chloroplast"/>
<comment type="function">
    <text evidence="1">RuBisCO catalyzes two reactions: the carboxylation of D-ribulose 1,5-bisphosphate, the primary event in carbon dioxide fixation, as well as the oxidative fragmentation of the pentose substrate in the photorespiration process. Both reactions occur simultaneously and in competition at the same active site.</text>
</comment>
<comment type="catalytic activity">
    <reaction evidence="1">
        <text>2 (2R)-3-phosphoglycerate + 2 H(+) = D-ribulose 1,5-bisphosphate + CO2 + H2O</text>
        <dbReference type="Rhea" id="RHEA:23124"/>
        <dbReference type="ChEBI" id="CHEBI:15377"/>
        <dbReference type="ChEBI" id="CHEBI:15378"/>
        <dbReference type="ChEBI" id="CHEBI:16526"/>
        <dbReference type="ChEBI" id="CHEBI:57870"/>
        <dbReference type="ChEBI" id="CHEBI:58272"/>
        <dbReference type="EC" id="4.1.1.39"/>
    </reaction>
</comment>
<comment type="catalytic activity">
    <reaction evidence="1">
        <text>D-ribulose 1,5-bisphosphate + O2 = 2-phosphoglycolate + (2R)-3-phosphoglycerate + 2 H(+)</text>
        <dbReference type="Rhea" id="RHEA:36631"/>
        <dbReference type="ChEBI" id="CHEBI:15378"/>
        <dbReference type="ChEBI" id="CHEBI:15379"/>
        <dbReference type="ChEBI" id="CHEBI:57870"/>
        <dbReference type="ChEBI" id="CHEBI:58033"/>
        <dbReference type="ChEBI" id="CHEBI:58272"/>
    </reaction>
</comment>
<comment type="cofactor">
    <cofactor evidence="1">
        <name>Mg(2+)</name>
        <dbReference type="ChEBI" id="CHEBI:18420"/>
    </cofactor>
    <text evidence="1">Binds 1 Mg(2+) ion per subunit.</text>
</comment>
<comment type="subunit">
    <text evidence="1">Heterohexadecamer of 8 large chains and 8 small chains; disulfide-linked. The disulfide link is formed within the large subunit homodimers.</text>
</comment>
<comment type="subcellular location">
    <subcellularLocation>
        <location>Plastid</location>
        <location>Chloroplast</location>
    </subcellularLocation>
</comment>
<comment type="PTM">
    <text evidence="1">The disulfide bond which can form in the large chain dimeric partners within the hexadecamer appears to be associated with oxidative stress and protein turnover.</text>
</comment>
<comment type="miscellaneous">
    <text evidence="1">The basic functional RuBisCO is composed of a large chain homodimer in a 'head-to-tail' conformation. In form I RuBisCO this homodimer is arranged in a barrel-like tetramer with the small subunits forming a tetrameric 'cap' on each end of the 'barrel'.</text>
</comment>
<comment type="similarity">
    <text evidence="1">Belongs to the RuBisCO large chain family. Type I subfamily.</text>
</comment>
<proteinExistence type="inferred from homology"/>
<sequence>RLTYYTPQYQTKDTDILAAFRMTPQPGVPPEEAGAAVAAESSTGTWTTVWTDGLTSLDRYKGRCYDIEPVAGETNQYIAYVAYPLDLFEEGSVTNLLTSIVGNVFGFKALRALRLEDLRIPPAYSKTFLGPPHGIQVERDKLNKYGRPLLGCTIKPKLGLSAKNYGRAVYECLRGGLDFTKDDETVNSQPFIRWRDRFLFVAEALFKSQAETGEIKGHYLNATAGHCDEMIKRAVFARELGAPIVMHDYLTGGYTANTSLAFYCRDNGLLLHIHRAMHAVIDRQKNHGMHFRVLAKTLRMSGGDHIHAGTVVGKLEGEREVTLGFVDLLRDDYIEKDRSRGIYFTQDWVSMPGVLPVASGGIHVWHMPALTEIFGDDSVLQFGGGTLGHPWGNAPGAVANRVALEACVQARNEGRDLARE</sequence>
<protein>
    <recommendedName>
        <fullName evidence="1">Ribulose bisphosphate carboxylase large chain</fullName>
        <shortName evidence="1">RuBisCO large subunit</shortName>
        <ecNumber evidence="1">4.1.1.39</ecNumber>
    </recommendedName>
</protein>
<organism>
    <name type="scientific">Anemia mexicana</name>
    <name type="common">Mexican fern</name>
    <dbReference type="NCBI Taxonomy" id="29599"/>
    <lineage>
        <taxon>Eukaryota</taxon>
        <taxon>Viridiplantae</taxon>
        <taxon>Streptophyta</taxon>
        <taxon>Embryophyta</taxon>
        <taxon>Tracheophyta</taxon>
        <taxon>Polypodiopsida</taxon>
        <taxon>Polypodiidae</taxon>
        <taxon>Schizaeales</taxon>
        <taxon>Anemiaceae</taxon>
        <taxon>Anemia</taxon>
    </lineage>
</organism>
<reference key="1">
    <citation type="journal article" date="1994" name="Proc. Natl. Acad. Sci. U.S.A.">
        <title>rbcL gene sequences provide evidence for the evolutionary lineages of leptosporangiate ferns.</title>
        <authorList>
            <person name="Hasebe M."/>
            <person name="Omori T."/>
            <person name="Nakazawa M."/>
            <person name="Sano T."/>
            <person name="Kato M."/>
            <person name="Iwatsuki K."/>
        </authorList>
    </citation>
    <scope>NUCLEOTIDE SEQUENCE [GENOMIC DNA]</scope>
    <source>
        <tissue>Leaf</tissue>
    </source>
</reference>
<gene>
    <name evidence="1" type="primary">rbcL</name>
</gene>